<reference key="1">
    <citation type="submission" date="2006-03" db="EMBL/GenBank/DDBJ databases">
        <title>Complete sequence of chromosome of Psychrobacter cryohalolentis K5.</title>
        <authorList>
            <consortium name="US DOE Joint Genome Institute"/>
            <person name="Copeland A."/>
            <person name="Lucas S."/>
            <person name="Lapidus A."/>
            <person name="Barry K."/>
            <person name="Detter J.C."/>
            <person name="Glavina T."/>
            <person name="Hammon N."/>
            <person name="Israni S."/>
            <person name="Dalin E."/>
            <person name="Tice H."/>
            <person name="Pitluck S."/>
            <person name="Brettin T."/>
            <person name="Bruce D."/>
            <person name="Han C."/>
            <person name="Tapia R."/>
            <person name="Sims D.R."/>
            <person name="Gilna P."/>
            <person name="Schmutz J."/>
            <person name="Larimer F."/>
            <person name="Land M."/>
            <person name="Hauser L."/>
            <person name="Kyrpides N."/>
            <person name="Kim E."/>
            <person name="Richardson P."/>
        </authorList>
    </citation>
    <scope>NUCLEOTIDE SEQUENCE [LARGE SCALE GENOMIC DNA]</scope>
    <source>
        <strain>ATCC BAA-1226 / DSM 17306 / VKM B-2378 / K5</strain>
    </source>
</reference>
<proteinExistence type="inferred from homology"/>
<accession>Q1QAQ4</accession>
<evidence type="ECO:0000255" key="1">
    <source>
        <dbReference type="HAMAP-Rule" id="MF_00037"/>
    </source>
</evidence>
<comment type="function">
    <text evidence="1">Cell wall formation.</text>
</comment>
<comment type="catalytic activity">
    <reaction evidence="1">
        <text>UDP-N-acetyl-alpha-D-muramate + NADP(+) = UDP-N-acetyl-3-O-(1-carboxyvinyl)-alpha-D-glucosamine + NADPH + H(+)</text>
        <dbReference type="Rhea" id="RHEA:12248"/>
        <dbReference type="ChEBI" id="CHEBI:15378"/>
        <dbReference type="ChEBI" id="CHEBI:57783"/>
        <dbReference type="ChEBI" id="CHEBI:58349"/>
        <dbReference type="ChEBI" id="CHEBI:68483"/>
        <dbReference type="ChEBI" id="CHEBI:70757"/>
        <dbReference type="EC" id="1.3.1.98"/>
    </reaction>
</comment>
<comment type="cofactor">
    <cofactor evidence="1">
        <name>FAD</name>
        <dbReference type="ChEBI" id="CHEBI:57692"/>
    </cofactor>
</comment>
<comment type="pathway">
    <text evidence="1">Cell wall biogenesis; peptidoglycan biosynthesis.</text>
</comment>
<comment type="subcellular location">
    <subcellularLocation>
        <location evidence="1">Cytoplasm</location>
    </subcellularLocation>
</comment>
<comment type="similarity">
    <text evidence="1">Belongs to the MurB family.</text>
</comment>
<sequence>MTSALCSKPIAPHTLSDDLADLSYSNTMALACMADSVVTLTDEVQLDEFMAYYEQDTQHRKPLFVLSGGSNVLLPAKLNAIVLRPQMRGIQVTAQTDFHVDIEVMAGENWHDLVVHTVAQGWYGLENLALIPGLTGAAPIQNIGAYGVQLEDCLQYVRAYHLPSQTWHDLTAVDCEFGYRDSIFKRQPNTWLISRVGFRLHTDATKVLASYGDVQTVAQSYATQQGRTKPMPADVMHAIIEIRQQKLPDPKQLPNCGSFFQNPIVPQDQFATLQSSYPAIVGYPMPDAMTKVAAGWLIEQAGLKGGGIEPIFTHQQQALVLTNHAPYIATKQDVAAAQKYIIDTVYKKFAIQLSREPVWVNADGSIGYDEHVV</sequence>
<keyword id="KW-0131">Cell cycle</keyword>
<keyword id="KW-0132">Cell division</keyword>
<keyword id="KW-0133">Cell shape</keyword>
<keyword id="KW-0961">Cell wall biogenesis/degradation</keyword>
<keyword id="KW-0963">Cytoplasm</keyword>
<keyword id="KW-0274">FAD</keyword>
<keyword id="KW-0285">Flavoprotein</keyword>
<keyword id="KW-0521">NADP</keyword>
<keyword id="KW-0560">Oxidoreductase</keyword>
<keyword id="KW-0573">Peptidoglycan synthesis</keyword>
<gene>
    <name evidence="1" type="primary">murB</name>
    <name type="ordered locus">Pcryo_1470</name>
</gene>
<organism>
    <name type="scientific">Psychrobacter cryohalolentis (strain ATCC BAA-1226 / DSM 17306 / VKM B-2378 / K5)</name>
    <dbReference type="NCBI Taxonomy" id="335284"/>
    <lineage>
        <taxon>Bacteria</taxon>
        <taxon>Pseudomonadati</taxon>
        <taxon>Pseudomonadota</taxon>
        <taxon>Gammaproteobacteria</taxon>
        <taxon>Moraxellales</taxon>
        <taxon>Moraxellaceae</taxon>
        <taxon>Psychrobacter</taxon>
    </lineage>
</organism>
<name>MURB_PSYCK</name>
<protein>
    <recommendedName>
        <fullName evidence="1">UDP-N-acetylenolpyruvoylglucosamine reductase</fullName>
        <ecNumber evidence="1">1.3.1.98</ecNumber>
    </recommendedName>
    <alternativeName>
        <fullName evidence="1">UDP-N-acetylmuramate dehydrogenase</fullName>
    </alternativeName>
</protein>
<dbReference type="EC" id="1.3.1.98" evidence="1"/>
<dbReference type="EMBL" id="CP000323">
    <property type="protein sequence ID" value="ABE75249.1"/>
    <property type="molecule type" value="Genomic_DNA"/>
</dbReference>
<dbReference type="RefSeq" id="WP_011513801.1">
    <property type="nucleotide sequence ID" value="NC_007969.1"/>
</dbReference>
<dbReference type="SMR" id="Q1QAQ4"/>
<dbReference type="STRING" id="335284.Pcryo_1470"/>
<dbReference type="KEGG" id="pcr:Pcryo_1470"/>
<dbReference type="eggNOG" id="COG0812">
    <property type="taxonomic scope" value="Bacteria"/>
</dbReference>
<dbReference type="HOGENOM" id="CLU_035304_0_0_6"/>
<dbReference type="UniPathway" id="UPA00219"/>
<dbReference type="Proteomes" id="UP000002425">
    <property type="component" value="Chromosome"/>
</dbReference>
<dbReference type="GO" id="GO:0005829">
    <property type="term" value="C:cytosol"/>
    <property type="evidence" value="ECO:0007669"/>
    <property type="project" value="TreeGrafter"/>
</dbReference>
<dbReference type="GO" id="GO:0071949">
    <property type="term" value="F:FAD binding"/>
    <property type="evidence" value="ECO:0007669"/>
    <property type="project" value="InterPro"/>
</dbReference>
<dbReference type="GO" id="GO:0008762">
    <property type="term" value="F:UDP-N-acetylmuramate dehydrogenase activity"/>
    <property type="evidence" value="ECO:0007669"/>
    <property type="project" value="UniProtKB-UniRule"/>
</dbReference>
<dbReference type="GO" id="GO:0051301">
    <property type="term" value="P:cell division"/>
    <property type="evidence" value="ECO:0007669"/>
    <property type="project" value="UniProtKB-KW"/>
</dbReference>
<dbReference type="GO" id="GO:0071555">
    <property type="term" value="P:cell wall organization"/>
    <property type="evidence" value="ECO:0007669"/>
    <property type="project" value="UniProtKB-KW"/>
</dbReference>
<dbReference type="GO" id="GO:0009252">
    <property type="term" value="P:peptidoglycan biosynthetic process"/>
    <property type="evidence" value="ECO:0007669"/>
    <property type="project" value="UniProtKB-UniRule"/>
</dbReference>
<dbReference type="GO" id="GO:0008360">
    <property type="term" value="P:regulation of cell shape"/>
    <property type="evidence" value="ECO:0007669"/>
    <property type="project" value="UniProtKB-KW"/>
</dbReference>
<dbReference type="Gene3D" id="3.30.465.10">
    <property type="match status" value="1"/>
</dbReference>
<dbReference type="Gene3D" id="3.90.78.10">
    <property type="entry name" value="UDP-N-acetylenolpyruvoylglucosamine reductase, C-terminal domain"/>
    <property type="match status" value="1"/>
</dbReference>
<dbReference type="Gene3D" id="3.30.43.10">
    <property type="entry name" value="Uridine Diphospho-n-acetylenolpyruvylglucosamine Reductase, domain 2"/>
    <property type="match status" value="1"/>
</dbReference>
<dbReference type="HAMAP" id="MF_00037">
    <property type="entry name" value="MurB"/>
    <property type="match status" value="1"/>
</dbReference>
<dbReference type="InterPro" id="IPR016166">
    <property type="entry name" value="FAD-bd_PCMH"/>
</dbReference>
<dbReference type="InterPro" id="IPR036318">
    <property type="entry name" value="FAD-bd_PCMH-like_sf"/>
</dbReference>
<dbReference type="InterPro" id="IPR016167">
    <property type="entry name" value="FAD-bd_PCMH_sub1"/>
</dbReference>
<dbReference type="InterPro" id="IPR016169">
    <property type="entry name" value="FAD-bd_PCMH_sub2"/>
</dbReference>
<dbReference type="InterPro" id="IPR003170">
    <property type="entry name" value="MurB"/>
</dbReference>
<dbReference type="InterPro" id="IPR011601">
    <property type="entry name" value="MurB_C"/>
</dbReference>
<dbReference type="InterPro" id="IPR036635">
    <property type="entry name" value="MurB_C_sf"/>
</dbReference>
<dbReference type="InterPro" id="IPR006094">
    <property type="entry name" value="Oxid_FAD_bind_N"/>
</dbReference>
<dbReference type="NCBIfam" id="TIGR00179">
    <property type="entry name" value="murB"/>
    <property type="match status" value="1"/>
</dbReference>
<dbReference type="NCBIfam" id="NF000755">
    <property type="entry name" value="PRK00046.1"/>
    <property type="match status" value="1"/>
</dbReference>
<dbReference type="PANTHER" id="PTHR21071">
    <property type="entry name" value="UDP-N-ACETYLENOLPYRUVOYLGLUCOSAMINE REDUCTASE"/>
    <property type="match status" value="1"/>
</dbReference>
<dbReference type="PANTHER" id="PTHR21071:SF4">
    <property type="entry name" value="UDP-N-ACETYLENOLPYRUVOYLGLUCOSAMINE REDUCTASE"/>
    <property type="match status" value="1"/>
</dbReference>
<dbReference type="Pfam" id="PF01565">
    <property type="entry name" value="FAD_binding_4"/>
    <property type="match status" value="1"/>
</dbReference>
<dbReference type="Pfam" id="PF02873">
    <property type="entry name" value="MurB_C"/>
    <property type="match status" value="1"/>
</dbReference>
<dbReference type="SUPFAM" id="SSF56176">
    <property type="entry name" value="FAD-binding/transporter-associated domain-like"/>
    <property type="match status" value="1"/>
</dbReference>
<dbReference type="SUPFAM" id="SSF56194">
    <property type="entry name" value="Uridine diphospho-N-Acetylenolpyruvylglucosamine reductase, MurB, C-terminal domain"/>
    <property type="match status" value="1"/>
</dbReference>
<dbReference type="PROSITE" id="PS51387">
    <property type="entry name" value="FAD_PCMH"/>
    <property type="match status" value="1"/>
</dbReference>
<feature type="chain" id="PRO_1000002902" description="UDP-N-acetylenolpyruvoylglucosamine reductase">
    <location>
        <begin position="1"/>
        <end position="373"/>
    </location>
</feature>
<feature type="domain" description="FAD-binding PCMH-type" evidence="1">
    <location>
        <begin position="30"/>
        <end position="203"/>
    </location>
</feature>
<feature type="active site" evidence="1">
    <location>
        <position position="180"/>
    </location>
</feature>
<feature type="active site" description="Proton donor" evidence="1">
    <location>
        <position position="258"/>
    </location>
</feature>
<feature type="active site" evidence="1">
    <location>
        <position position="356"/>
    </location>
</feature>